<organism>
    <name type="scientific">Pseudomonas aeruginosa (strain UCBPP-PA14)</name>
    <dbReference type="NCBI Taxonomy" id="208963"/>
    <lineage>
        <taxon>Bacteria</taxon>
        <taxon>Pseudomonadati</taxon>
        <taxon>Pseudomonadota</taxon>
        <taxon>Gammaproteobacteria</taxon>
        <taxon>Pseudomonadales</taxon>
        <taxon>Pseudomonadaceae</taxon>
        <taxon>Pseudomonas</taxon>
    </lineage>
</organism>
<comment type="function">
    <text evidence="1">Involved in phosphonate degradation.</text>
</comment>
<comment type="catalytic activity">
    <reaction evidence="1">
        <text>(2-aminoethyl)phosphonate + pyruvate = phosphonoacetaldehyde + L-alanine</text>
        <dbReference type="Rhea" id="RHEA:17021"/>
        <dbReference type="ChEBI" id="CHEBI:15361"/>
        <dbReference type="ChEBI" id="CHEBI:57418"/>
        <dbReference type="ChEBI" id="CHEBI:57972"/>
        <dbReference type="ChEBI" id="CHEBI:58383"/>
        <dbReference type="EC" id="2.6.1.37"/>
    </reaction>
</comment>
<comment type="cofactor">
    <cofactor evidence="1">
        <name>pyridoxal 5'-phosphate</name>
        <dbReference type="ChEBI" id="CHEBI:597326"/>
    </cofactor>
</comment>
<comment type="subunit">
    <text evidence="1">Homodimer.</text>
</comment>
<comment type="similarity">
    <text evidence="1">Belongs to the class-V pyridoxal-phosphate-dependent aminotransferase family. PhnW subfamily.</text>
</comment>
<dbReference type="EC" id="2.6.1.37" evidence="1"/>
<dbReference type="EMBL" id="CP000438">
    <property type="protein sequence ID" value="ABJ10498.1"/>
    <property type="molecule type" value="Genomic_DNA"/>
</dbReference>
<dbReference type="RefSeq" id="WP_003086851.1">
    <property type="nucleotide sequence ID" value="NZ_CP034244.1"/>
</dbReference>
<dbReference type="SMR" id="Q02JF1"/>
<dbReference type="KEGG" id="pau:PA14_47300"/>
<dbReference type="PseudoCAP" id="PA14_47300"/>
<dbReference type="HOGENOM" id="CLU_027686_3_1_6"/>
<dbReference type="BioCyc" id="PAER208963:G1G74-3974-MONOMER"/>
<dbReference type="Proteomes" id="UP000000653">
    <property type="component" value="Chromosome"/>
</dbReference>
<dbReference type="GO" id="GO:0047304">
    <property type="term" value="F:2-aminoethylphosphonate-pyruvate transaminase activity"/>
    <property type="evidence" value="ECO:0007669"/>
    <property type="project" value="UniProtKB-UniRule"/>
</dbReference>
<dbReference type="GO" id="GO:0019700">
    <property type="term" value="P:organic phosphonate catabolic process"/>
    <property type="evidence" value="ECO:0007669"/>
    <property type="project" value="InterPro"/>
</dbReference>
<dbReference type="Gene3D" id="3.90.1150.10">
    <property type="entry name" value="Aspartate Aminotransferase, domain 1"/>
    <property type="match status" value="1"/>
</dbReference>
<dbReference type="Gene3D" id="3.40.640.10">
    <property type="entry name" value="Type I PLP-dependent aspartate aminotransferase-like (Major domain)"/>
    <property type="match status" value="1"/>
</dbReference>
<dbReference type="HAMAP" id="MF_01376">
    <property type="entry name" value="PhnW_aminotrans_5"/>
    <property type="match status" value="1"/>
</dbReference>
<dbReference type="InterPro" id="IPR000192">
    <property type="entry name" value="Aminotrans_V_dom"/>
</dbReference>
<dbReference type="InterPro" id="IPR012703">
    <property type="entry name" value="NH2EtPonate_pyrv_transaminase"/>
</dbReference>
<dbReference type="InterPro" id="IPR015424">
    <property type="entry name" value="PyrdxlP-dep_Trfase"/>
</dbReference>
<dbReference type="InterPro" id="IPR015421">
    <property type="entry name" value="PyrdxlP-dep_Trfase_major"/>
</dbReference>
<dbReference type="InterPro" id="IPR015422">
    <property type="entry name" value="PyrdxlP-dep_Trfase_small"/>
</dbReference>
<dbReference type="InterPro" id="IPR024169">
    <property type="entry name" value="SP_NH2Trfase/AEP_transaminase"/>
</dbReference>
<dbReference type="NCBIfam" id="TIGR03301">
    <property type="entry name" value="PhnW-AepZ"/>
    <property type="match status" value="1"/>
</dbReference>
<dbReference type="NCBIfam" id="NF010006">
    <property type="entry name" value="PRK13479.1"/>
    <property type="match status" value="1"/>
</dbReference>
<dbReference type="NCBIfam" id="TIGR02326">
    <property type="entry name" value="transamin_PhnW"/>
    <property type="match status" value="1"/>
</dbReference>
<dbReference type="PANTHER" id="PTHR42778">
    <property type="entry name" value="2-AMINOETHYLPHOSPHONATE--PYRUVATE TRANSAMINASE"/>
    <property type="match status" value="1"/>
</dbReference>
<dbReference type="PANTHER" id="PTHR42778:SF1">
    <property type="entry name" value="2-AMINOETHYLPHOSPHONATE--PYRUVATE TRANSAMINASE"/>
    <property type="match status" value="1"/>
</dbReference>
<dbReference type="Pfam" id="PF00266">
    <property type="entry name" value="Aminotran_5"/>
    <property type="match status" value="1"/>
</dbReference>
<dbReference type="PIRSF" id="PIRSF000524">
    <property type="entry name" value="SPT"/>
    <property type="match status" value="1"/>
</dbReference>
<dbReference type="SUPFAM" id="SSF53383">
    <property type="entry name" value="PLP-dependent transferases"/>
    <property type="match status" value="1"/>
</dbReference>
<sequence>MSTAERAPILLTPGPLTTSYRTRRAMMVDWGSWDSDFNELTASVCQRLLKIVGGEGSHTCVPLQGSGTFAVEAAIGTLVPRDGKVLVLINGAYGKRLAKICEVLQRPFSTFETEENVPTTAADVERLLAADPAISHVALIHCETSTGILNPLEAIAKVVERHGKRLIVDAMSSFGAIGIDARKVPFDALIAASGKCLEGVPGMGFVFARSAALEASAGNCHSLAMDLQDQHAYMRKTGQWRFTPPTHVVAALHEALSQYEEEGGLPARQRRYASNCETLLGEMARLGFRSFLPAEIQAPIIVTFHAPRDPRYRFADFYQRVREKGFILYPGKLTQVETFRVGCIGHVDAAEMRQAVAAIGEALRELEVLEI</sequence>
<reference key="1">
    <citation type="journal article" date="2006" name="Genome Biol.">
        <title>Genomic analysis reveals that Pseudomonas aeruginosa virulence is combinatorial.</title>
        <authorList>
            <person name="Lee D.G."/>
            <person name="Urbach J.M."/>
            <person name="Wu G."/>
            <person name="Liberati N.T."/>
            <person name="Feinbaum R.L."/>
            <person name="Miyata S."/>
            <person name="Diggins L.T."/>
            <person name="He J."/>
            <person name="Saucier M."/>
            <person name="Deziel E."/>
            <person name="Friedman L."/>
            <person name="Li L."/>
            <person name="Grills G."/>
            <person name="Montgomery K."/>
            <person name="Kucherlapati R."/>
            <person name="Rahme L.G."/>
            <person name="Ausubel F.M."/>
        </authorList>
    </citation>
    <scope>NUCLEOTIDE SEQUENCE [LARGE SCALE GENOMIC DNA]</scope>
    <source>
        <strain>UCBPP-PA14</strain>
    </source>
</reference>
<keyword id="KW-0032">Aminotransferase</keyword>
<keyword id="KW-0663">Pyridoxal phosphate</keyword>
<keyword id="KW-0670">Pyruvate</keyword>
<keyword id="KW-0808">Transferase</keyword>
<protein>
    <recommendedName>
        <fullName evidence="1">2-aminoethylphosphonate--pyruvate transaminase</fullName>
        <ecNumber evidence="1">2.6.1.37</ecNumber>
    </recommendedName>
    <alternativeName>
        <fullName evidence="1">2-aminoethylphosphonate aminotransferase</fullName>
    </alternativeName>
    <alternativeName>
        <fullName evidence="1">AEP transaminase</fullName>
        <shortName evidence="1">AEPT</shortName>
    </alternativeName>
</protein>
<feature type="chain" id="PRO_0000286774" description="2-aminoethylphosphonate--pyruvate transaminase">
    <location>
        <begin position="1"/>
        <end position="371"/>
    </location>
</feature>
<feature type="modified residue" description="N6-(pyridoxal phosphate)lysine" evidence="1">
    <location>
        <position position="195"/>
    </location>
</feature>
<gene>
    <name evidence="1" type="primary">phnW</name>
    <name type="ordered locus">PA14_47300</name>
</gene>
<name>PHNW_PSEAB</name>
<proteinExistence type="inferred from homology"/>
<evidence type="ECO:0000255" key="1">
    <source>
        <dbReference type="HAMAP-Rule" id="MF_01376"/>
    </source>
</evidence>
<accession>Q02JF1</accession>